<sequence>MATINQLVRKPRIKLVVKSNVPALEACPQKRGVCTRVYTTTPKKPNSALRKVCRVRLTNGFEVTSYIGGEGHNLQEHSVVLIRGGRVKDLPGVRYHTVRGALDCAGVKDRKQARSKYGVKRPKA</sequence>
<name>RS12_AERS4</name>
<reference key="1">
    <citation type="journal article" date="2008" name="BMC Genomics">
        <title>The genome of Aeromonas salmonicida subsp. salmonicida A449: insights into the evolution of a fish pathogen.</title>
        <authorList>
            <person name="Reith M.E."/>
            <person name="Singh R.K."/>
            <person name="Curtis B."/>
            <person name="Boyd J.M."/>
            <person name="Bouevitch A."/>
            <person name="Kimball J."/>
            <person name="Munholland J."/>
            <person name="Murphy C."/>
            <person name="Sarty D."/>
            <person name="Williams J."/>
            <person name="Nash J.H."/>
            <person name="Johnson S.C."/>
            <person name="Brown L.L."/>
        </authorList>
    </citation>
    <scope>NUCLEOTIDE SEQUENCE [LARGE SCALE GENOMIC DNA]</scope>
    <source>
        <strain>A449</strain>
    </source>
</reference>
<dbReference type="EMBL" id="CP000644">
    <property type="protein sequence ID" value="ABO88478.1"/>
    <property type="status" value="ALT_INIT"/>
    <property type="molecule type" value="Genomic_DNA"/>
</dbReference>
<dbReference type="RefSeq" id="WP_005306278.1">
    <property type="nucleotide sequence ID" value="NC_009348.1"/>
</dbReference>
<dbReference type="SMR" id="A4SHV6"/>
<dbReference type="STRING" id="29491.GCA_000820065_03167"/>
<dbReference type="GeneID" id="92725349"/>
<dbReference type="KEGG" id="asa:ASA_0290"/>
<dbReference type="eggNOG" id="COG0048">
    <property type="taxonomic scope" value="Bacteria"/>
</dbReference>
<dbReference type="HOGENOM" id="CLU_104295_1_2_6"/>
<dbReference type="Proteomes" id="UP000000225">
    <property type="component" value="Chromosome"/>
</dbReference>
<dbReference type="GO" id="GO:0015935">
    <property type="term" value="C:small ribosomal subunit"/>
    <property type="evidence" value="ECO:0007669"/>
    <property type="project" value="InterPro"/>
</dbReference>
<dbReference type="GO" id="GO:0019843">
    <property type="term" value="F:rRNA binding"/>
    <property type="evidence" value="ECO:0007669"/>
    <property type="project" value="UniProtKB-UniRule"/>
</dbReference>
<dbReference type="GO" id="GO:0003735">
    <property type="term" value="F:structural constituent of ribosome"/>
    <property type="evidence" value="ECO:0007669"/>
    <property type="project" value="InterPro"/>
</dbReference>
<dbReference type="GO" id="GO:0000049">
    <property type="term" value="F:tRNA binding"/>
    <property type="evidence" value="ECO:0007669"/>
    <property type="project" value="UniProtKB-UniRule"/>
</dbReference>
<dbReference type="GO" id="GO:0006412">
    <property type="term" value="P:translation"/>
    <property type="evidence" value="ECO:0007669"/>
    <property type="project" value="UniProtKB-UniRule"/>
</dbReference>
<dbReference type="CDD" id="cd03368">
    <property type="entry name" value="Ribosomal_S12"/>
    <property type="match status" value="1"/>
</dbReference>
<dbReference type="FunFam" id="2.40.50.140:FF:000001">
    <property type="entry name" value="30S ribosomal protein S12"/>
    <property type="match status" value="1"/>
</dbReference>
<dbReference type="Gene3D" id="2.40.50.140">
    <property type="entry name" value="Nucleic acid-binding proteins"/>
    <property type="match status" value="1"/>
</dbReference>
<dbReference type="HAMAP" id="MF_00403_B">
    <property type="entry name" value="Ribosomal_uS12_B"/>
    <property type="match status" value="1"/>
</dbReference>
<dbReference type="InterPro" id="IPR012340">
    <property type="entry name" value="NA-bd_OB-fold"/>
</dbReference>
<dbReference type="InterPro" id="IPR006032">
    <property type="entry name" value="Ribosomal_uS12"/>
</dbReference>
<dbReference type="InterPro" id="IPR005679">
    <property type="entry name" value="Ribosomal_uS12_bac"/>
</dbReference>
<dbReference type="NCBIfam" id="TIGR00981">
    <property type="entry name" value="rpsL_bact"/>
    <property type="match status" value="1"/>
</dbReference>
<dbReference type="PANTHER" id="PTHR11652">
    <property type="entry name" value="30S RIBOSOMAL PROTEIN S12 FAMILY MEMBER"/>
    <property type="match status" value="1"/>
</dbReference>
<dbReference type="Pfam" id="PF00164">
    <property type="entry name" value="Ribosom_S12_S23"/>
    <property type="match status" value="1"/>
</dbReference>
<dbReference type="PIRSF" id="PIRSF002133">
    <property type="entry name" value="Ribosomal_S12/S23"/>
    <property type="match status" value="1"/>
</dbReference>
<dbReference type="PRINTS" id="PR01034">
    <property type="entry name" value="RIBOSOMALS12"/>
</dbReference>
<dbReference type="SUPFAM" id="SSF50249">
    <property type="entry name" value="Nucleic acid-binding proteins"/>
    <property type="match status" value="1"/>
</dbReference>
<dbReference type="PROSITE" id="PS00055">
    <property type="entry name" value="RIBOSOMAL_S12"/>
    <property type="match status" value="1"/>
</dbReference>
<comment type="function">
    <text evidence="2">With S4 and S5 plays an important role in translational accuracy.</text>
</comment>
<comment type="function">
    <text evidence="2">Interacts with and stabilizes bases of the 16S rRNA that are involved in tRNA selection in the A site and with the mRNA backbone. Located at the interface of the 30S and 50S subunits, it traverses the body of the 30S subunit contacting proteins on the other side and probably holding the rRNA structure together. The combined cluster of proteins S8, S12 and S17 appears to hold together the shoulder and platform of the 30S subunit.</text>
</comment>
<comment type="subunit">
    <text evidence="2">Part of the 30S ribosomal subunit. Contacts proteins S8 and S17. May interact with IF1 in the 30S initiation complex.</text>
</comment>
<comment type="similarity">
    <text evidence="2">Belongs to the universal ribosomal protein uS12 family.</text>
</comment>
<comment type="sequence caution" evidence="3">
    <conflict type="erroneous initiation">
        <sequence resource="EMBL-CDS" id="ABO88478"/>
    </conflict>
</comment>
<accession>A4SHV6</accession>
<protein>
    <recommendedName>
        <fullName evidence="2">Small ribosomal subunit protein uS12</fullName>
    </recommendedName>
    <alternativeName>
        <fullName evidence="3">30S ribosomal protein S12</fullName>
    </alternativeName>
</protein>
<gene>
    <name evidence="2" type="primary">rpsL</name>
    <name type="ordered locus">ASA_0290</name>
</gene>
<keyword id="KW-0488">Methylation</keyword>
<keyword id="KW-0687">Ribonucleoprotein</keyword>
<keyword id="KW-0689">Ribosomal protein</keyword>
<keyword id="KW-0694">RNA-binding</keyword>
<keyword id="KW-0699">rRNA-binding</keyword>
<keyword id="KW-0820">tRNA-binding</keyword>
<organism>
    <name type="scientific">Aeromonas salmonicida (strain A449)</name>
    <dbReference type="NCBI Taxonomy" id="382245"/>
    <lineage>
        <taxon>Bacteria</taxon>
        <taxon>Pseudomonadati</taxon>
        <taxon>Pseudomonadota</taxon>
        <taxon>Gammaproteobacteria</taxon>
        <taxon>Aeromonadales</taxon>
        <taxon>Aeromonadaceae</taxon>
        <taxon>Aeromonas</taxon>
    </lineage>
</organism>
<evidence type="ECO:0000250" key="1"/>
<evidence type="ECO:0000255" key="2">
    <source>
        <dbReference type="HAMAP-Rule" id="MF_00403"/>
    </source>
</evidence>
<evidence type="ECO:0000305" key="3"/>
<proteinExistence type="inferred from homology"/>
<feature type="chain" id="PRO_0000295948" description="Small ribosomal subunit protein uS12">
    <location>
        <begin position="1"/>
        <end position="124"/>
    </location>
</feature>
<feature type="modified residue" description="3-methylthioaspartic acid" evidence="1">
    <location>
        <position position="89"/>
    </location>
</feature>